<reference key="1">
    <citation type="journal article" date="2002" name="Nature">
        <title>Comparison of the genomes of two Xanthomonas pathogens with differing host specificities.</title>
        <authorList>
            <person name="da Silva A.C.R."/>
            <person name="Ferro J.A."/>
            <person name="Reinach F.C."/>
            <person name="Farah C.S."/>
            <person name="Furlan L.R."/>
            <person name="Quaggio R.B."/>
            <person name="Monteiro-Vitorello C.B."/>
            <person name="Van Sluys M.A."/>
            <person name="Almeida N.F. Jr."/>
            <person name="Alves L.M.C."/>
            <person name="do Amaral A.M."/>
            <person name="Bertolini M.C."/>
            <person name="Camargo L.E.A."/>
            <person name="Camarotte G."/>
            <person name="Cannavan F."/>
            <person name="Cardozo J."/>
            <person name="Chambergo F."/>
            <person name="Ciapina L.P."/>
            <person name="Cicarelli R.M.B."/>
            <person name="Coutinho L.L."/>
            <person name="Cursino-Santos J.R."/>
            <person name="El-Dorry H."/>
            <person name="Faria J.B."/>
            <person name="Ferreira A.J.S."/>
            <person name="Ferreira R.C.C."/>
            <person name="Ferro M.I.T."/>
            <person name="Formighieri E.F."/>
            <person name="Franco M.C."/>
            <person name="Greggio C.C."/>
            <person name="Gruber A."/>
            <person name="Katsuyama A.M."/>
            <person name="Kishi L.T."/>
            <person name="Leite R.P."/>
            <person name="Lemos E.G.M."/>
            <person name="Lemos M.V.F."/>
            <person name="Locali E.C."/>
            <person name="Machado M.A."/>
            <person name="Madeira A.M.B.N."/>
            <person name="Martinez-Rossi N.M."/>
            <person name="Martins E.C."/>
            <person name="Meidanis J."/>
            <person name="Menck C.F.M."/>
            <person name="Miyaki C.Y."/>
            <person name="Moon D.H."/>
            <person name="Moreira L.M."/>
            <person name="Novo M.T.M."/>
            <person name="Okura V.K."/>
            <person name="Oliveira M.C."/>
            <person name="Oliveira V.R."/>
            <person name="Pereira H.A."/>
            <person name="Rossi A."/>
            <person name="Sena J.A.D."/>
            <person name="Silva C."/>
            <person name="de Souza R.F."/>
            <person name="Spinola L.A.F."/>
            <person name="Takita M.A."/>
            <person name="Tamura R.E."/>
            <person name="Teixeira E.C."/>
            <person name="Tezza R.I.D."/>
            <person name="Trindade dos Santos M."/>
            <person name="Truffi D."/>
            <person name="Tsai S.M."/>
            <person name="White F.F."/>
            <person name="Setubal J.C."/>
            <person name="Kitajima J.P."/>
        </authorList>
    </citation>
    <scope>NUCLEOTIDE SEQUENCE [LARGE SCALE GENOMIC DNA]</scope>
    <source>
        <strain>306</strain>
    </source>
</reference>
<feature type="chain" id="PRO_0000163390" description="Ribosome maturation factor RimM">
    <location>
        <begin position="1"/>
        <end position="170"/>
    </location>
</feature>
<feature type="domain" description="PRC barrel" evidence="1">
    <location>
        <begin position="98"/>
        <end position="170"/>
    </location>
</feature>
<comment type="function">
    <text evidence="1">An accessory protein needed during the final step in the assembly of 30S ribosomal subunit, possibly for assembly of the head region. Essential for efficient processing of 16S rRNA. May be needed both before and after RbfA during the maturation of 16S rRNA. It has affinity for free ribosomal 30S subunits but not for 70S ribosomes.</text>
</comment>
<comment type="subunit">
    <text evidence="1">Binds ribosomal protein uS19.</text>
</comment>
<comment type="subcellular location">
    <subcellularLocation>
        <location evidence="1">Cytoplasm</location>
    </subcellularLocation>
</comment>
<comment type="domain">
    <text evidence="1">The PRC barrel domain binds ribosomal protein uS19.</text>
</comment>
<comment type="similarity">
    <text evidence="1">Belongs to the RimM family.</text>
</comment>
<protein>
    <recommendedName>
        <fullName evidence="1">Ribosome maturation factor RimM</fullName>
    </recommendedName>
</protein>
<sequence>MKQNERRILLGRIVGAFGVKGELKLESWTEPRTAIFRYQPWIVRSPSGQESVVSGVRGRDQGKNLIAVFPGVTDRDTVEAMHGTEIYVARSALPPPKPDEYYWVDLEELQVETVEGVKLGTVSHLFSTGSNDVVVVRGDRERMIPFVFPDFVKSVDFEANLIVVDWDPDF</sequence>
<organism>
    <name type="scientific">Xanthomonas axonopodis pv. citri (strain 306)</name>
    <dbReference type="NCBI Taxonomy" id="190486"/>
    <lineage>
        <taxon>Bacteria</taxon>
        <taxon>Pseudomonadati</taxon>
        <taxon>Pseudomonadota</taxon>
        <taxon>Gammaproteobacteria</taxon>
        <taxon>Lysobacterales</taxon>
        <taxon>Lysobacteraceae</taxon>
        <taxon>Xanthomonas</taxon>
    </lineage>
</organism>
<name>RIMM_XANAC</name>
<gene>
    <name evidence="1" type="primary">rimM</name>
    <name type="ordered locus">XAC1293</name>
</gene>
<keyword id="KW-0143">Chaperone</keyword>
<keyword id="KW-0963">Cytoplasm</keyword>
<keyword id="KW-0690">Ribosome biogenesis</keyword>
<keyword id="KW-0698">rRNA processing</keyword>
<dbReference type="EMBL" id="AE008923">
    <property type="protein sequence ID" value="AAM36164.1"/>
    <property type="molecule type" value="Genomic_DNA"/>
</dbReference>
<dbReference type="RefSeq" id="WP_011050822.1">
    <property type="nucleotide sequence ID" value="NC_003919.1"/>
</dbReference>
<dbReference type="SMR" id="Q8PMY2"/>
<dbReference type="GeneID" id="66910463"/>
<dbReference type="KEGG" id="xac:XAC1293"/>
<dbReference type="eggNOG" id="COG0806">
    <property type="taxonomic scope" value="Bacteria"/>
</dbReference>
<dbReference type="HOGENOM" id="CLU_077636_1_0_6"/>
<dbReference type="Proteomes" id="UP000000576">
    <property type="component" value="Chromosome"/>
</dbReference>
<dbReference type="GO" id="GO:0005737">
    <property type="term" value="C:cytoplasm"/>
    <property type="evidence" value="ECO:0007669"/>
    <property type="project" value="UniProtKB-SubCell"/>
</dbReference>
<dbReference type="GO" id="GO:0005840">
    <property type="term" value="C:ribosome"/>
    <property type="evidence" value="ECO:0007669"/>
    <property type="project" value="InterPro"/>
</dbReference>
<dbReference type="GO" id="GO:0043022">
    <property type="term" value="F:ribosome binding"/>
    <property type="evidence" value="ECO:0007669"/>
    <property type="project" value="InterPro"/>
</dbReference>
<dbReference type="GO" id="GO:0042274">
    <property type="term" value="P:ribosomal small subunit biogenesis"/>
    <property type="evidence" value="ECO:0007669"/>
    <property type="project" value="UniProtKB-UniRule"/>
</dbReference>
<dbReference type="GO" id="GO:0006364">
    <property type="term" value="P:rRNA processing"/>
    <property type="evidence" value="ECO:0007669"/>
    <property type="project" value="UniProtKB-UniRule"/>
</dbReference>
<dbReference type="Gene3D" id="2.30.30.240">
    <property type="entry name" value="PRC-barrel domain"/>
    <property type="match status" value="1"/>
</dbReference>
<dbReference type="Gene3D" id="2.40.30.60">
    <property type="entry name" value="RimM"/>
    <property type="match status" value="1"/>
</dbReference>
<dbReference type="HAMAP" id="MF_00014">
    <property type="entry name" value="Ribosome_mat_RimM"/>
    <property type="match status" value="1"/>
</dbReference>
<dbReference type="InterPro" id="IPR011033">
    <property type="entry name" value="PRC_barrel-like_sf"/>
</dbReference>
<dbReference type="InterPro" id="IPR056792">
    <property type="entry name" value="PRC_RimM"/>
</dbReference>
<dbReference type="InterPro" id="IPR011961">
    <property type="entry name" value="RimM"/>
</dbReference>
<dbReference type="InterPro" id="IPR002676">
    <property type="entry name" value="RimM_N"/>
</dbReference>
<dbReference type="InterPro" id="IPR036976">
    <property type="entry name" value="RimM_N_sf"/>
</dbReference>
<dbReference type="InterPro" id="IPR009000">
    <property type="entry name" value="Transl_B-barrel_sf"/>
</dbReference>
<dbReference type="NCBIfam" id="TIGR02273">
    <property type="entry name" value="16S_RimM"/>
    <property type="match status" value="1"/>
</dbReference>
<dbReference type="PANTHER" id="PTHR33692">
    <property type="entry name" value="RIBOSOME MATURATION FACTOR RIMM"/>
    <property type="match status" value="1"/>
</dbReference>
<dbReference type="PANTHER" id="PTHR33692:SF1">
    <property type="entry name" value="RIBOSOME MATURATION FACTOR RIMM"/>
    <property type="match status" value="1"/>
</dbReference>
<dbReference type="Pfam" id="PF24986">
    <property type="entry name" value="PRC_RimM"/>
    <property type="match status" value="1"/>
</dbReference>
<dbReference type="Pfam" id="PF01782">
    <property type="entry name" value="RimM"/>
    <property type="match status" value="1"/>
</dbReference>
<dbReference type="SUPFAM" id="SSF50346">
    <property type="entry name" value="PRC-barrel domain"/>
    <property type="match status" value="1"/>
</dbReference>
<dbReference type="SUPFAM" id="SSF50447">
    <property type="entry name" value="Translation proteins"/>
    <property type="match status" value="1"/>
</dbReference>
<proteinExistence type="inferred from homology"/>
<accession>Q8PMY2</accession>
<evidence type="ECO:0000255" key="1">
    <source>
        <dbReference type="HAMAP-Rule" id="MF_00014"/>
    </source>
</evidence>